<accession>Q9LIR0</accession>
<dbReference type="EMBL" id="AP001297">
    <property type="protein sequence ID" value="BAB03015.1"/>
    <property type="molecule type" value="Genomic_DNA"/>
</dbReference>
<dbReference type="EMBL" id="CP002686">
    <property type="protein sequence ID" value="AEE76840.1"/>
    <property type="molecule type" value="Genomic_DNA"/>
</dbReference>
<dbReference type="RefSeq" id="NP_189039.1">
    <property type="nucleotide sequence ID" value="NM_113302.1"/>
</dbReference>
<dbReference type="STRING" id="3702.Q9LIR0"/>
<dbReference type="PaxDb" id="3702-AT3G23970.1"/>
<dbReference type="EnsemblPlants" id="AT3G23970.1">
    <property type="protein sequence ID" value="AT3G23970.1"/>
    <property type="gene ID" value="AT3G23970"/>
</dbReference>
<dbReference type="GeneID" id="821981"/>
<dbReference type="Gramene" id="AT3G23970.1">
    <property type="protein sequence ID" value="AT3G23970.1"/>
    <property type="gene ID" value="AT3G23970"/>
</dbReference>
<dbReference type="KEGG" id="ath:AT3G23970"/>
<dbReference type="Araport" id="AT3G23970"/>
<dbReference type="TAIR" id="AT3G23970"/>
<dbReference type="HOGENOM" id="CLU_029240_0_0_1"/>
<dbReference type="InParanoid" id="Q9LIR0"/>
<dbReference type="OMA" id="EDETKCM"/>
<dbReference type="OrthoDB" id="674184at2759"/>
<dbReference type="PhylomeDB" id="Q9LIR0"/>
<dbReference type="PRO" id="PR:Q9LIR0"/>
<dbReference type="Proteomes" id="UP000006548">
    <property type="component" value="Chromosome 3"/>
</dbReference>
<dbReference type="ExpressionAtlas" id="Q9LIR0">
    <property type="expression patterns" value="baseline and differential"/>
</dbReference>
<dbReference type="InterPro" id="IPR056592">
    <property type="entry name" value="At3g26010-like_b-prop"/>
</dbReference>
<dbReference type="InterPro" id="IPR036047">
    <property type="entry name" value="F-box-like_dom_sf"/>
</dbReference>
<dbReference type="InterPro" id="IPR001810">
    <property type="entry name" value="F-box_dom"/>
</dbReference>
<dbReference type="InterPro" id="IPR050796">
    <property type="entry name" value="SCF_F-box_component"/>
</dbReference>
<dbReference type="PANTHER" id="PTHR31672">
    <property type="entry name" value="BNACNNG10540D PROTEIN"/>
    <property type="match status" value="1"/>
</dbReference>
<dbReference type="PANTHER" id="PTHR31672:SF13">
    <property type="entry name" value="F-BOX PROTEIN CPR30-LIKE"/>
    <property type="match status" value="1"/>
</dbReference>
<dbReference type="Pfam" id="PF24750">
    <property type="entry name" value="b-prop_At3g26010-like"/>
    <property type="match status" value="1"/>
</dbReference>
<dbReference type="SMART" id="SM00256">
    <property type="entry name" value="FBOX"/>
    <property type="match status" value="1"/>
</dbReference>
<dbReference type="SUPFAM" id="SSF81383">
    <property type="entry name" value="F-box domain"/>
    <property type="match status" value="1"/>
</dbReference>
<dbReference type="PROSITE" id="PS50181">
    <property type="entry name" value="FBOX"/>
    <property type="match status" value="1"/>
</dbReference>
<organism>
    <name type="scientific">Arabidopsis thaliana</name>
    <name type="common">Mouse-ear cress</name>
    <dbReference type="NCBI Taxonomy" id="3702"/>
    <lineage>
        <taxon>Eukaryota</taxon>
        <taxon>Viridiplantae</taxon>
        <taxon>Streptophyta</taxon>
        <taxon>Embryophyta</taxon>
        <taxon>Tracheophyta</taxon>
        <taxon>Spermatophyta</taxon>
        <taxon>Magnoliopsida</taxon>
        <taxon>eudicotyledons</taxon>
        <taxon>Gunneridae</taxon>
        <taxon>Pentapetalae</taxon>
        <taxon>rosids</taxon>
        <taxon>malvids</taxon>
        <taxon>Brassicales</taxon>
        <taxon>Brassicaceae</taxon>
        <taxon>Camelineae</taxon>
        <taxon>Arabidopsis</taxon>
    </lineage>
</organism>
<evidence type="ECO:0000255" key="1">
    <source>
        <dbReference type="PROSITE-ProRule" id="PRU00080"/>
    </source>
</evidence>
<keyword id="KW-1185">Reference proteome</keyword>
<gene>
    <name type="ordered locus">At3g23970</name>
    <name type="ORF">F14O13.16</name>
</gene>
<feature type="chain" id="PRO_0000283453" description="Putative F-box protein At3g23970">
    <location>
        <begin position="1"/>
        <end position="413"/>
    </location>
</feature>
<feature type="domain" description="F-box" evidence="1">
    <location>
        <begin position="1"/>
        <end position="42"/>
    </location>
</feature>
<protein>
    <recommendedName>
        <fullName>Putative F-box protein At3g23970</fullName>
    </recommendedName>
</protein>
<reference key="1">
    <citation type="journal article" date="2000" name="DNA Res.">
        <title>Structural analysis of Arabidopsis thaliana chromosome 3. II. Sequence features of the 4,251,695 bp regions covered by 90 P1, TAC and BAC clones.</title>
        <authorList>
            <person name="Kaneko T."/>
            <person name="Katoh T."/>
            <person name="Sato S."/>
            <person name="Nakamura Y."/>
            <person name="Asamizu E."/>
            <person name="Tabata S."/>
        </authorList>
    </citation>
    <scope>NUCLEOTIDE SEQUENCE [LARGE SCALE GENOMIC DNA]</scope>
    <source>
        <strain>cv. Columbia</strain>
    </source>
</reference>
<reference key="2">
    <citation type="journal article" date="2017" name="Plant J.">
        <title>Araport11: a complete reannotation of the Arabidopsis thaliana reference genome.</title>
        <authorList>
            <person name="Cheng C.Y."/>
            <person name="Krishnakumar V."/>
            <person name="Chan A.P."/>
            <person name="Thibaud-Nissen F."/>
            <person name="Schobel S."/>
            <person name="Town C.D."/>
        </authorList>
    </citation>
    <scope>GENOME REANNOTATION</scope>
    <source>
        <strain>cv. Columbia</strain>
    </source>
</reference>
<proteinExistence type="predicted"/>
<name>FB183_ARATH</name>
<sequence>MNIPPELTFEVLVRLPLKSLARFRSVRKEWKLVIDSEFFRDCFMSHNSSSVSWSIIQTRPHKLTLEIVGHHGCKTWGLTRSPGSLVGFFADTTIKRLRVLACTDGLVLIYTETSYGTPMHYVGNPLFQEWCPIPLPSYFYLQSVERIRNHQRFNDSALVIKMQSGAVVSYKVVWLFPRNSTTIDFLIYSSDTGMWEARIATCLHSSFWFSHHKPIALNGILHWLCNFSTSFVAYDFYGGHDDYACHIISFPDCEKDDDQLRRFRRTLSTSDGSIVYFNEFGENGNRRLRVWRLVKYTGGPEAWQLFWEVSLASVTKLGIDYFPVVMHPLKSEIIYLWSRNKKGMVLFNLRTNVFSLHKESEDETKCMDGCTLSFNRCSEYMETIHNYGGPNYLLASQYVLPRWLHRLPRPQPS</sequence>